<accession>Q0J968</accession>
<accession>A0A0N7KJW4</accession>
<accession>B9FD79</accession>
<accession>Q7XR63</accession>
<organism>
    <name type="scientific">Oryza sativa subsp. japonica</name>
    <name type="common">Rice</name>
    <dbReference type="NCBI Taxonomy" id="39947"/>
    <lineage>
        <taxon>Eukaryota</taxon>
        <taxon>Viridiplantae</taxon>
        <taxon>Streptophyta</taxon>
        <taxon>Embryophyta</taxon>
        <taxon>Tracheophyta</taxon>
        <taxon>Spermatophyta</taxon>
        <taxon>Magnoliopsida</taxon>
        <taxon>Liliopsida</taxon>
        <taxon>Poales</taxon>
        <taxon>Poaceae</taxon>
        <taxon>BOP clade</taxon>
        <taxon>Oryzoideae</taxon>
        <taxon>Oryzeae</taxon>
        <taxon>Oryzinae</taxon>
        <taxon>Oryza</taxon>
        <taxon>Oryza sativa</taxon>
    </lineage>
</organism>
<comment type="function">
    <text evidence="2">Possesses carboxylesterase activity in vitro.</text>
</comment>
<comment type="similarity">
    <text evidence="3">Belongs to the AB hydrolase superfamily. AB hydrolase 2 family.</text>
</comment>
<comment type="sequence caution" evidence="3">
    <conflict type="erroneous initiation">
        <sequence resource="EMBL-CDS" id="CAE02817"/>
    </conflict>
    <text>Truncated N-terminus.</text>
</comment>
<comment type="sequence caution" evidence="3">
    <conflict type="erroneous initiation">
        <sequence resource="EMBL-CDS" id="EEE61876"/>
    </conflict>
    <text>Truncated N-terminus.</text>
</comment>
<evidence type="ECO:0000250" key="1">
    <source>
        <dbReference type="UniProtKB" id="O75608"/>
    </source>
</evidence>
<evidence type="ECO:0000250" key="2">
    <source>
        <dbReference type="UniProtKB" id="Q84WK4"/>
    </source>
</evidence>
<evidence type="ECO:0000305" key="3"/>
<evidence type="ECO:0000312" key="4">
    <source>
        <dbReference type="EMBL" id="BAF16119.1"/>
    </source>
</evidence>
<evidence type="ECO:0000312" key="5">
    <source>
        <dbReference type="EMBL" id="CAE02817.1"/>
    </source>
</evidence>
<evidence type="ECO:0000312" key="6">
    <source>
        <dbReference type="EMBL" id="EEE61876.1"/>
    </source>
</evidence>
<sequence length="235" mass="25069">MGMAAAGGYGRVLWLHGSGQTGEESRAQVAPYFAAPELASVRFSFPTAPTSSIPCYGGEVITAWFAIPEVPITARTARDEKEVLKAVERVHEMLDGEVAAGTSPSNIFVCGLSQGGALAIASVLLYPMTLGGCVVFSGSLPLSKTFAESIPSEARKTPVLWFHGMADGVVLFEAGHAGCAFLQEIGMHCEFKAYPALGHTLVDEELQYFRQWIKDRLSQGTGVPVPSLSDKMDLQ</sequence>
<gene>
    <name evidence="4" type="ordered locus">Os04g0669600</name>
    <name evidence="3" type="ordered locus">LOC_Os04g57380</name>
    <name evidence="6" type="ORF">OsJ_16563</name>
    <name evidence="5" type="ORF">OSJNBa0043A12.22</name>
</gene>
<dbReference type="EC" id="3.1.1.-" evidence="3"/>
<dbReference type="EMBL" id="AL606619">
    <property type="protein sequence ID" value="CAE02817.1"/>
    <property type="status" value="ALT_INIT"/>
    <property type="molecule type" value="Genomic_DNA"/>
</dbReference>
<dbReference type="EMBL" id="AP008210">
    <property type="protein sequence ID" value="BAF16119.1"/>
    <property type="molecule type" value="Genomic_DNA"/>
</dbReference>
<dbReference type="EMBL" id="AP014960">
    <property type="protein sequence ID" value="BAS91545.1"/>
    <property type="molecule type" value="Genomic_DNA"/>
</dbReference>
<dbReference type="EMBL" id="CM000141">
    <property type="protein sequence ID" value="EEE61876.1"/>
    <property type="status" value="ALT_INIT"/>
    <property type="molecule type" value="Genomic_DNA"/>
</dbReference>
<dbReference type="EMBL" id="AK110767">
    <property type="protein sequence ID" value="BAG99034.1"/>
    <property type="molecule type" value="mRNA"/>
</dbReference>
<dbReference type="RefSeq" id="XP_015635946.1">
    <property type="nucleotide sequence ID" value="XM_015780460.1"/>
</dbReference>
<dbReference type="RefSeq" id="XP_015635947.1">
    <property type="nucleotide sequence ID" value="XM_015780461.1"/>
</dbReference>
<dbReference type="SMR" id="Q0J968"/>
<dbReference type="FunCoup" id="Q0J968">
    <property type="interactions" value="1664"/>
</dbReference>
<dbReference type="STRING" id="39947.Q0J968"/>
<dbReference type="ESTHER" id="orysa-q7xr63">
    <property type="family name" value="LYsophospholipase_carboxylesterase"/>
</dbReference>
<dbReference type="PaxDb" id="39947-Q0J968"/>
<dbReference type="EnsemblPlants" id="Os04t0669600-01">
    <property type="protein sequence ID" value="Os04t0669600-01"/>
    <property type="gene ID" value="Os04g0669600"/>
</dbReference>
<dbReference type="Gramene" id="Os04t0669600-01">
    <property type="protein sequence ID" value="Os04t0669600-01"/>
    <property type="gene ID" value="Os04g0669600"/>
</dbReference>
<dbReference type="KEGG" id="dosa:Os04g0669600"/>
<dbReference type="eggNOG" id="KOG2112">
    <property type="taxonomic scope" value="Eukaryota"/>
</dbReference>
<dbReference type="HOGENOM" id="CLU_049413_1_0_1"/>
<dbReference type="InParanoid" id="Q0J968"/>
<dbReference type="OMA" id="PCYGGEV"/>
<dbReference type="OrthoDB" id="2418081at2759"/>
<dbReference type="Proteomes" id="UP000000763">
    <property type="component" value="Chromosome 4"/>
</dbReference>
<dbReference type="Proteomes" id="UP000007752">
    <property type="component" value="Chromosome 4"/>
</dbReference>
<dbReference type="Proteomes" id="UP000059680">
    <property type="component" value="Chromosome 4"/>
</dbReference>
<dbReference type="GO" id="GO:0005737">
    <property type="term" value="C:cytoplasm"/>
    <property type="evidence" value="ECO:0000318"/>
    <property type="project" value="GO_Central"/>
</dbReference>
<dbReference type="GO" id="GO:0052689">
    <property type="term" value="F:carboxylic ester hydrolase activity"/>
    <property type="evidence" value="ECO:0000318"/>
    <property type="project" value="GO_Central"/>
</dbReference>
<dbReference type="GO" id="GO:0008474">
    <property type="term" value="F:palmitoyl-(protein) hydrolase activity"/>
    <property type="evidence" value="ECO:0000318"/>
    <property type="project" value="GO_Central"/>
</dbReference>
<dbReference type="GO" id="GO:0006631">
    <property type="term" value="P:fatty acid metabolic process"/>
    <property type="evidence" value="ECO:0007669"/>
    <property type="project" value="UniProtKB-KW"/>
</dbReference>
<dbReference type="GO" id="GO:0010363">
    <property type="term" value="P:regulation of plant-type hypersensitive response"/>
    <property type="evidence" value="ECO:0000318"/>
    <property type="project" value="GO_Central"/>
</dbReference>
<dbReference type="FunFam" id="3.40.50.1820:FF:000411">
    <property type="entry name" value="Probable carboxylesterase Os04g0669600"/>
    <property type="match status" value="1"/>
</dbReference>
<dbReference type="Gene3D" id="3.40.50.1820">
    <property type="entry name" value="alpha/beta hydrolase"/>
    <property type="match status" value="1"/>
</dbReference>
<dbReference type="InterPro" id="IPR029058">
    <property type="entry name" value="AB_hydrolase_fold"/>
</dbReference>
<dbReference type="InterPro" id="IPR050565">
    <property type="entry name" value="LYPA1-2/EST-like"/>
</dbReference>
<dbReference type="InterPro" id="IPR003140">
    <property type="entry name" value="PLipase/COase/thioEstase"/>
</dbReference>
<dbReference type="PANTHER" id="PTHR10655:SF30">
    <property type="entry name" value="CARBOXYLESTERASE OS04G0669600-RELATED"/>
    <property type="match status" value="1"/>
</dbReference>
<dbReference type="PANTHER" id="PTHR10655">
    <property type="entry name" value="LYSOPHOSPHOLIPASE-RELATED"/>
    <property type="match status" value="1"/>
</dbReference>
<dbReference type="Pfam" id="PF02230">
    <property type="entry name" value="Abhydrolase_2"/>
    <property type="match status" value="1"/>
</dbReference>
<dbReference type="SUPFAM" id="SSF53474">
    <property type="entry name" value="alpha/beta-Hydrolases"/>
    <property type="match status" value="1"/>
</dbReference>
<keyword id="KW-0276">Fatty acid metabolism</keyword>
<keyword id="KW-0378">Hydrolase</keyword>
<keyword id="KW-0443">Lipid metabolism</keyword>
<keyword id="KW-1185">Reference proteome</keyword>
<feature type="chain" id="PRO_0000433449" description="Probable carboxylesterase Os04g0669600">
    <location>
        <begin position="1"/>
        <end position="235"/>
    </location>
</feature>
<feature type="active site" description="Charge relay system" evidence="1">
    <location>
        <position position="113"/>
    </location>
</feature>
<feature type="active site" description="Charge relay system" evidence="1">
    <location>
        <position position="167"/>
    </location>
</feature>
<feature type="active site" description="Charge relay system" evidence="1">
    <location>
        <position position="199"/>
    </location>
</feature>
<feature type="sequence conflict" description="In Ref. 1; CAE02817." evidence="3" ref="1">
    <original>A</original>
    <variation>VA</variation>
    <location>
        <position position="193"/>
    </location>
</feature>
<protein>
    <recommendedName>
        <fullName evidence="3">Probable carboxylesterase Os04g0669600</fullName>
        <ecNumber evidence="3">3.1.1.-</ecNumber>
    </recommendedName>
</protein>
<name>CAEH2_ORYSJ</name>
<proteinExistence type="evidence at transcript level"/>
<reference key="1">
    <citation type="journal article" date="2002" name="Nature">
        <title>Sequence and analysis of rice chromosome 4.</title>
        <authorList>
            <person name="Feng Q."/>
            <person name="Zhang Y."/>
            <person name="Hao P."/>
            <person name="Wang S."/>
            <person name="Fu G."/>
            <person name="Huang Y."/>
            <person name="Li Y."/>
            <person name="Zhu J."/>
            <person name="Liu Y."/>
            <person name="Hu X."/>
            <person name="Jia P."/>
            <person name="Zhang Y."/>
            <person name="Zhao Q."/>
            <person name="Ying K."/>
            <person name="Yu S."/>
            <person name="Tang Y."/>
            <person name="Weng Q."/>
            <person name="Zhang L."/>
            <person name="Lu Y."/>
            <person name="Mu J."/>
            <person name="Lu Y."/>
            <person name="Zhang L.S."/>
            <person name="Yu Z."/>
            <person name="Fan D."/>
            <person name="Liu X."/>
            <person name="Lu T."/>
            <person name="Li C."/>
            <person name="Wu Y."/>
            <person name="Sun T."/>
            <person name="Lei H."/>
            <person name="Li T."/>
            <person name="Hu H."/>
            <person name="Guan J."/>
            <person name="Wu M."/>
            <person name="Zhang R."/>
            <person name="Zhou B."/>
            <person name="Chen Z."/>
            <person name="Chen L."/>
            <person name="Jin Z."/>
            <person name="Wang R."/>
            <person name="Yin H."/>
            <person name="Cai Z."/>
            <person name="Ren S."/>
            <person name="Lv G."/>
            <person name="Gu W."/>
            <person name="Zhu G."/>
            <person name="Tu Y."/>
            <person name="Jia J."/>
            <person name="Zhang Y."/>
            <person name="Chen J."/>
            <person name="Kang H."/>
            <person name="Chen X."/>
            <person name="Shao C."/>
            <person name="Sun Y."/>
            <person name="Hu Q."/>
            <person name="Zhang X."/>
            <person name="Zhang W."/>
            <person name="Wang L."/>
            <person name="Ding C."/>
            <person name="Sheng H."/>
            <person name="Gu J."/>
            <person name="Chen S."/>
            <person name="Ni L."/>
            <person name="Zhu F."/>
            <person name="Chen W."/>
            <person name="Lan L."/>
            <person name="Lai Y."/>
            <person name="Cheng Z."/>
            <person name="Gu M."/>
            <person name="Jiang J."/>
            <person name="Li J."/>
            <person name="Hong G."/>
            <person name="Xue Y."/>
            <person name="Han B."/>
        </authorList>
    </citation>
    <scope>NUCLEOTIDE SEQUENCE [LARGE SCALE GENOMIC DNA]</scope>
    <source>
        <strain>cv. Nipponbare</strain>
    </source>
</reference>
<reference key="2">
    <citation type="journal article" date="2005" name="Nature">
        <title>The map-based sequence of the rice genome.</title>
        <authorList>
            <consortium name="International rice genome sequencing project (IRGSP)"/>
        </authorList>
    </citation>
    <scope>NUCLEOTIDE SEQUENCE [LARGE SCALE GENOMIC DNA]</scope>
    <source>
        <strain>cv. Nipponbare</strain>
    </source>
</reference>
<reference key="3">
    <citation type="journal article" date="2008" name="Nucleic Acids Res.">
        <title>The rice annotation project database (RAP-DB): 2008 update.</title>
        <authorList>
            <consortium name="The rice annotation project (RAP)"/>
        </authorList>
    </citation>
    <scope>GENOME REANNOTATION</scope>
    <source>
        <strain>cv. Nipponbare</strain>
    </source>
</reference>
<reference key="4">
    <citation type="journal article" date="2013" name="Rice">
        <title>Improvement of the Oryza sativa Nipponbare reference genome using next generation sequence and optical map data.</title>
        <authorList>
            <person name="Kawahara Y."/>
            <person name="de la Bastide M."/>
            <person name="Hamilton J.P."/>
            <person name="Kanamori H."/>
            <person name="McCombie W.R."/>
            <person name="Ouyang S."/>
            <person name="Schwartz D.C."/>
            <person name="Tanaka T."/>
            <person name="Wu J."/>
            <person name="Zhou S."/>
            <person name="Childs K.L."/>
            <person name="Davidson R.M."/>
            <person name="Lin H."/>
            <person name="Quesada-Ocampo L."/>
            <person name="Vaillancourt B."/>
            <person name="Sakai H."/>
            <person name="Lee S.S."/>
            <person name="Kim J."/>
            <person name="Numa H."/>
            <person name="Itoh T."/>
            <person name="Buell C.R."/>
            <person name="Matsumoto T."/>
        </authorList>
    </citation>
    <scope>GENOME REANNOTATION</scope>
    <source>
        <strain>cv. Nipponbare</strain>
    </source>
</reference>
<reference key="5">
    <citation type="journal article" date="2005" name="PLoS Biol.">
        <title>The genomes of Oryza sativa: a history of duplications.</title>
        <authorList>
            <person name="Yu J."/>
            <person name="Wang J."/>
            <person name="Lin W."/>
            <person name="Li S."/>
            <person name="Li H."/>
            <person name="Zhou J."/>
            <person name="Ni P."/>
            <person name="Dong W."/>
            <person name="Hu S."/>
            <person name="Zeng C."/>
            <person name="Zhang J."/>
            <person name="Zhang Y."/>
            <person name="Li R."/>
            <person name="Xu Z."/>
            <person name="Li S."/>
            <person name="Li X."/>
            <person name="Zheng H."/>
            <person name="Cong L."/>
            <person name="Lin L."/>
            <person name="Yin J."/>
            <person name="Geng J."/>
            <person name="Li G."/>
            <person name="Shi J."/>
            <person name="Liu J."/>
            <person name="Lv H."/>
            <person name="Li J."/>
            <person name="Wang J."/>
            <person name="Deng Y."/>
            <person name="Ran L."/>
            <person name="Shi X."/>
            <person name="Wang X."/>
            <person name="Wu Q."/>
            <person name="Li C."/>
            <person name="Ren X."/>
            <person name="Wang J."/>
            <person name="Wang X."/>
            <person name="Li D."/>
            <person name="Liu D."/>
            <person name="Zhang X."/>
            <person name="Ji Z."/>
            <person name="Zhao W."/>
            <person name="Sun Y."/>
            <person name="Zhang Z."/>
            <person name="Bao J."/>
            <person name="Han Y."/>
            <person name="Dong L."/>
            <person name="Ji J."/>
            <person name="Chen P."/>
            <person name="Wu S."/>
            <person name="Liu J."/>
            <person name="Xiao Y."/>
            <person name="Bu D."/>
            <person name="Tan J."/>
            <person name="Yang L."/>
            <person name="Ye C."/>
            <person name="Zhang J."/>
            <person name="Xu J."/>
            <person name="Zhou Y."/>
            <person name="Yu Y."/>
            <person name="Zhang B."/>
            <person name="Zhuang S."/>
            <person name="Wei H."/>
            <person name="Liu B."/>
            <person name="Lei M."/>
            <person name="Yu H."/>
            <person name="Li Y."/>
            <person name="Xu H."/>
            <person name="Wei S."/>
            <person name="He X."/>
            <person name="Fang L."/>
            <person name="Zhang Z."/>
            <person name="Zhang Y."/>
            <person name="Huang X."/>
            <person name="Su Z."/>
            <person name="Tong W."/>
            <person name="Li J."/>
            <person name="Tong Z."/>
            <person name="Li S."/>
            <person name="Ye J."/>
            <person name="Wang L."/>
            <person name="Fang L."/>
            <person name="Lei T."/>
            <person name="Chen C.-S."/>
            <person name="Chen H.-C."/>
            <person name="Xu Z."/>
            <person name="Li H."/>
            <person name="Huang H."/>
            <person name="Zhang F."/>
            <person name="Xu H."/>
            <person name="Li N."/>
            <person name="Zhao C."/>
            <person name="Li S."/>
            <person name="Dong L."/>
            <person name="Huang Y."/>
            <person name="Li L."/>
            <person name="Xi Y."/>
            <person name="Qi Q."/>
            <person name="Li W."/>
            <person name="Zhang B."/>
            <person name="Hu W."/>
            <person name="Zhang Y."/>
            <person name="Tian X."/>
            <person name="Jiao Y."/>
            <person name="Liang X."/>
            <person name="Jin J."/>
            <person name="Gao L."/>
            <person name="Zheng W."/>
            <person name="Hao B."/>
            <person name="Liu S.-M."/>
            <person name="Wang W."/>
            <person name="Yuan L."/>
            <person name="Cao M."/>
            <person name="McDermott J."/>
            <person name="Samudrala R."/>
            <person name="Wang J."/>
            <person name="Wong G.K.-S."/>
            <person name="Yang H."/>
        </authorList>
    </citation>
    <scope>NUCLEOTIDE SEQUENCE [LARGE SCALE GENOMIC DNA]</scope>
    <source>
        <strain>cv. Nipponbare</strain>
    </source>
</reference>
<reference key="6">
    <citation type="journal article" date="2003" name="Science">
        <title>Collection, mapping, and annotation of over 28,000 cDNA clones from japonica rice.</title>
        <authorList>
            <consortium name="The rice full-length cDNA consortium"/>
        </authorList>
    </citation>
    <scope>NUCLEOTIDE SEQUENCE [LARGE SCALE MRNA]</scope>
    <source>
        <strain>cv. Nipponbare</strain>
    </source>
</reference>